<name>CE85L_HUMAN</name>
<protein>
    <recommendedName>
        <fullName evidence="13">Centrosomal protein of 85 kDa-like</fullName>
    </recommendedName>
    <alternativeName>
        <fullName>Serologically defined breast cancer antigen NY-BR-15</fullName>
    </alternativeName>
</protein>
<sequence length="805" mass="91808">MWGRFLAPEASGRDSPGGARSFPAGPDYSSAWLPANESLWQATTVPSNHRNNHIRRHSIASDSGDTGIGTSCSDSVEDHSTSSGTLSFKPSQSLITLPTAHVMPSNSSASISKLRESLTPDGSKWSTSLMQTLGNHSRGEQDSSLDMKDFRPLRKWSSLSKLTAPDNCGQGGTVCREESRNGLEKIGKAKALTSQLRTIGPSCLHDSMEMLRLEDKEINKKRSSTLDCKYKFESCSKEDFRASSSTLRRQPVDMTYSALPESKPIMTSSEAFEPPKYLMLGQQAVGGVPIQPSVRTQMWLTEQLRTNPLEGRNTEDSYSLAPWQQQQIEDFRQGSETPMQVLTGSSRQSYSPGYQDFSKWESMLKIKEGLLRQKEIVIDRQKQQITHLHERIRDNELRAQHAMLGHYVNCEDSYVASLQPQYENTSLQTPFSEESVSHSQQGEFEQKLASTEKEVLQLNEFLKQRLSLFSEEKKKLEEKLKTRDRYISSLKKKCQKESEQNKEKQRRIETLEKYLADLPTLDDVQSQSLQLQILEEKNKNLQEALIDTEKKLEEIKKQCQDKETQLICQKKKEKELVTTVQSLQQKVERCLEDGIRLPMLDAKQLQNENDNLRQQNETASKIIDSQQDEIDRMILEIQSMQGKLSKEKLTTQKMMEELEKKERNVQRLTKALLENQRQTDETCSLLDQGQEPDQSRQQTVLSKRPLFDLTVIDQLFKEMSCCLFDLKALCSILNQRAQGKEPNLSLLLGIRSMNCSAEETENDHSTETLTKKLSDVCQLRRDIDELRTTISDRYAQDMGDNCITQ</sequence>
<feature type="chain" id="PRO_0000297676" description="Centrosomal protein of 85 kDa-like">
    <location>
        <begin position="1"/>
        <end position="805"/>
    </location>
</feature>
<feature type="region of interest" description="Disordered" evidence="2">
    <location>
        <begin position="1"/>
        <end position="27"/>
    </location>
</feature>
<feature type="region of interest" description="Disordered" evidence="2">
    <location>
        <begin position="50"/>
        <end position="89"/>
    </location>
</feature>
<feature type="coiled-coil region" evidence="1">
    <location>
        <begin position="439"/>
        <end position="682"/>
    </location>
</feature>
<feature type="compositionally biased region" description="Polar residues" evidence="2">
    <location>
        <begin position="60"/>
        <end position="74"/>
    </location>
</feature>
<feature type="site" description="Breakpoint for translocation to form the CEP85L-PDGFRB fusion protein">
    <location>
        <begin position="674"/>
        <end position="675"/>
    </location>
</feature>
<feature type="modified residue" description="Phosphoserine" evidence="15">
    <location>
        <position position="15"/>
    </location>
</feature>
<feature type="modified residue" description="Phosphoserine" evidence="15">
    <location>
        <position position="207"/>
    </location>
</feature>
<feature type="splice variant" id="VSP_027337" description="In isoform 3." evidence="12">
    <location>
        <begin position="1"/>
        <end position="102"/>
    </location>
</feature>
<feature type="splice variant" id="VSP_027338" description="In isoform 2 and isoform 4." evidence="10 11">
    <original>MWGRFLAPEASGRDSPGGARSFPA</original>
    <variation>MIWRNNWKSTTGRLNVKLQSDKLQHGC</variation>
    <location>
        <begin position="1"/>
        <end position="24"/>
    </location>
</feature>
<feature type="splice variant" id="VSP_027339" description="In isoform 2, isoform 3 and isoform 5." evidence="10 12">
    <original>LKTRDRYISSLKKKCQK</original>
    <variation>VGFSNKVELGQQHFLSI</variation>
    <location>
        <begin position="480"/>
        <end position="496"/>
    </location>
</feature>
<feature type="splice variant" id="VSP_027340" description="In isoform 2, isoform 3 and isoform 5." evidence="10 12">
    <location>
        <begin position="497"/>
        <end position="805"/>
    </location>
</feature>
<feature type="sequence variant" id="VAR_084269" description="In LIS10; dbSNP:rs1774230502." evidence="8">
    <original>S</original>
    <variation>C</variation>
    <location>
        <position position="58"/>
    </location>
</feature>
<feature type="sequence variant" id="VAR_084270" description="In LIS10; dbSNP:rs1774229245." evidence="8">
    <original>D</original>
    <variation>N</variation>
    <location>
        <position position="65"/>
    </location>
</feature>
<feature type="sequence variant" id="VAR_084271" description="In LIS10; uncertain significance; dbSNP:rs1774228957." evidence="8">
    <original>I</original>
    <variation>T</variation>
    <location>
        <position position="68"/>
    </location>
</feature>
<feature type="sequence variant" id="VAR_084272" description="In LIS10; uncertain significance; dbSNP:rs1774228815." evidence="8">
    <original>G</original>
    <variation>R</variation>
    <location>
        <position position="69"/>
    </location>
</feature>
<feature type="sequence variant" id="VAR_034670" description="In dbSNP:rs3734381." evidence="4">
    <original>S</original>
    <variation>G</variation>
    <location>
        <position position="137"/>
    </location>
</feature>
<feature type="sequence variant" id="VAR_034671" description="In dbSNP:rs9489444.">
    <original>D</original>
    <variation>V</variation>
    <location>
        <position position="166"/>
    </location>
</feature>
<feature type="sequence variant" id="VAR_034672" description="In dbSNP:rs3734382." evidence="4 9">
    <original>P</original>
    <variation>T</variation>
    <location>
        <position position="251"/>
    </location>
</feature>
<feature type="sequence variant" id="VAR_036247" description="In a breast cancer sample; somatic mutation." evidence="5">
    <original>S</original>
    <variation>F</variation>
    <location>
        <position position="345"/>
    </location>
</feature>
<feature type="sequence variant" id="VAR_053941" description="In dbSNP:rs9489410.">
    <original>Q</original>
    <variation>H</variation>
    <location>
        <position position="532"/>
    </location>
</feature>
<feature type="sequence variant" id="VAR_053942" description="In dbSNP:rs7743702.">
    <original>M</original>
    <variation>V</variation>
    <location>
        <position position="640"/>
    </location>
</feature>
<keyword id="KW-0025">Alternative splicing</keyword>
<keyword id="KW-0160">Chromosomal rearrangement</keyword>
<keyword id="KW-0175">Coiled coil</keyword>
<keyword id="KW-0963">Cytoplasm</keyword>
<keyword id="KW-0206">Cytoskeleton</keyword>
<keyword id="KW-0225">Disease variant</keyword>
<keyword id="KW-0451">Lissencephaly</keyword>
<keyword id="KW-0597">Phosphoprotein</keyword>
<keyword id="KW-1267">Proteomics identification</keyword>
<keyword id="KW-1185">Reference proteome</keyword>
<evidence type="ECO:0000255" key="1"/>
<evidence type="ECO:0000256" key="2">
    <source>
        <dbReference type="SAM" id="MobiDB-lite"/>
    </source>
</evidence>
<evidence type="ECO:0000269" key="3">
    <source>
    </source>
</evidence>
<evidence type="ECO:0000269" key="4">
    <source>
    </source>
</evidence>
<evidence type="ECO:0000269" key="5">
    <source>
    </source>
</evidence>
<evidence type="ECO:0000269" key="6">
    <source>
    </source>
</evidence>
<evidence type="ECO:0000269" key="7">
    <source>
    </source>
</evidence>
<evidence type="ECO:0000269" key="8">
    <source>
    </source>
</evidence>
<evidence type="ECO:0000269" key="9">
    <source ref="1"/>
</evidence>
<evidence type="ECO:0000303" key="10">
    <source>
    </source>
</evidence>
<evidence type="ECO:0000303" key="11">
    <source>
    </source>
</evidence>
<evidence type="ECO:0000303" key="12">
    <source ref="1"/>
</evidence>
<evidence type="ECO:0000305" key="13"/>
<evidence type="ECO:0000312" key="14">
    <source>
        <dbReference type="HGNC" id="HGNC:21638"/>
    </source>
</evidence>
<evidence type="ECO:0007744" key="15">
    <source>
    </source>
</evidence>
<dbReference type="EMBL" id="AY313778">
    <property type="protein sequence ID" value="AAP81009.1"/>
    <property type="molecule type" value="mRNA"/>
</dbReference>
<dbReference type="EMBL" id="AL359634">
    <property type="status" value="NOT_ANNOTATED_CDS"/>
    <property type="molecule type" value="Genomic_DNA"/>
</dbReference>
<dbReference type="EMBL" id="AL390069">
    <property type="status" value="NOT_ANNOTATED_CDS"/>
    <property type="molecule type" value="Genomic_DNA"/>
</dbReference>
<dbReference type="EMBL" id="AL589993">
    <property type="status" value="NOT_ANNOTATED_CDS"/>
    <property type="molecule type" value="Genomic_DNA"/>
</dbReference>
<dbReference type="EMBL" id="Z99496">
    <property type="status" value="NOT_ANNOTATED_CDS"/>
    <property type="molecule type" value="Genomic_DNA"/>
</dbReference>
<dbReference type="EMBL" id="CH471051">
    <property type="protein sequence ID" value="EAW48196.1"/>
    <property type="molecule type" value="Genomic_DNA"/>
</dbReference>
<dbReference type="EMBL" id="CH471051">
    <property type="protein sequence ID" value="EAW48197.1"/>
    <property type="molecule type" value="Genomic_DNA"/>
</dbReference>
<dbReference type="EMBL" id="BC110835">
    <property type="protein sequence ID" value="AAI10836.1"/>
    <property type="status" value="ALT_INIT"/>
    <property type="molecule type" value="mRNA"/>
</dbReference>
<dbReference type="EMBL" id="BC126140">
    <property type="protein sequence ID" value="AAI26141.1"/>
    <property type="molecule type" value="mRNA"/>
</dbReference>
<dbReference type="EMBL" id="BC126142">
    <property type="protein sequence ID" value="AAI26143.1"/>
    <property type="molecule type" value="mRNA"/>
</dbReference>
<dbReference type="EMBL" id="AF308284">
    <property type="protein sequence ID" value="AAG48252.1"/>
    <property type="molecule type" value="mRNA"/>
</dbReference>
<dbReference type="CCDS" id="CCDS43498.1">
    <molecule id="Q5SZL2-1"/>
</dbReference>
<dbReference type="CCDS" id="CCDS5119.2">
    <molecule id="Q5SZL2-5"/>
</dbReference>
<dbReference type="CCDS" id="CCDS55052.1">
    <molecule id="Q5SZL2-4"/>
</dbReference>
<dbReference type="RefSeq" id="NP_001035940.1">
    <molecule id="Q5SZL2-1"/>
    <property type="nucleotide sequence ID" value="NM_001042475.3"/>
</dbReference>
<dbReference type="RefSeq" id="NP_001171506.1">
    <molecule id="Q5SZL2-4"/>
    <property type="nucleotide sequence ID" value="NM_001178035.2"/>
</dbReference>
<dbReference type="RefSeq" id="NP_996804.2">
    <molecule id="Q5SZL2-5"/>
    <property type="nucleotide sequence ID" value="NM_206921.3"/>
</dbReference>
<dbReference type="RefSeq" id="XP_011534111.1">
    <property type="nucleotide sequence ID" value="XM_011535809.2"/>
</dbReference>
<dbReference type="RefSeq" id="XP_016866335.1">
    <molecule id="Q5SZL2-4"/>
    <property type="nucleotide sequence ID" value="XM_017010846.2"/>
</dbReference>
<dbReference type="RefSeq" id="XP_047274714.1">
    <molecule id="Q5SZL2-4"/>
    <property type="nucleotide sequence ID" value="XM_047418758.1"/>
</dbReference>
<dbReference type="RefSeq" id="XP_047274715.1">
    <molecule id="Q5SZL2-4"/>
    <property type="nucleotide sequence ID" value="XM_047418759.1"/>
</dbReference>
<dbReference type="RefSeq" id="XP_047274716.1">
    <molecule id="Q5SZL2-4"/>
    <property type="nucleotide sequence ID" value="XM_047418760.1"/>
</dbReference>
<dbReference type="SMR" id="Q5SZL2"/>
<dbReference type="BioGRID" id="132255">
    <property type="interactions" value="36"/>
</dbReference>
<dbReference type="FunCoup" id="Q5SZL2">
    <property type="interactions" value="276"/>
</dbReference>
<dbReference type="IntAct" id="Q5SZL2">
    <property type="interactions" value="30"/>
</dbReference>
<dbReference type="STRING" id="9606.ENSP00000357474"/>
<dbReference type="GlyGen" id="Q5SZL2">
    <property type="glycosylation" value="1 site, 1 O-linked glycan (1 site)"/>
</dbReference>
<dbReference type="iPTMnet" id="Q5SZL2"/>
<dbReference type="PhosphoSitePlus" id="Q5SZL2"/>
<dbReference type="BioMuta" id="CEP85L"/>
<dbReference type="DMDM" id="74762226"/>
<dbReference type="jPOST" id="Q5SZL2"/>
<dbReference type="MassIVE" id="Q5SZL2"/>
<dbReference type="PaxDb" id="9606-ENSP00000357474"/>
<dbReference type="PeptideAtlas" id="Q5SZL2"/>
<dbReference type="ProteomicsDB" id="64080">
    <molecule id="Q5SZL2-1"/>
</dbReference>
<dbReference type="ProteomicsDB" id="64081">
    <molecule id="Q5SZL2-2"/>
</dbReference>
<dbReference type="ProteomicsDB" id="64082">
    <molecule id="Q5SZL2-3"/>
</dbReference>
<dbReference type="ProteomicsDB" id="64083">
    <molecule id="Q5SZL2-4"/>
</dbReference>
<dbReference type="ProteomicsDB" id="64084">
    <molecule id="Q5SZL2-5"/>
</dbReference>
<dbReference type="Pumba" id="Q5SZL2"/>
<dbReference type="Antibodypedia" id="32566">
    <property type="antibodies" value="73 antibodies from 14 providers"/>
</dbReference>
<dbReference type="DNASU" id="387119"/>
<dbReference type="Ensembl" id="ENST00000360290.7">
    <molecule id="Q5SZL2-3"/>
    <property type="protein sequence ID" value="ENSP00000353434.3"/>
    <property type="gene ID" value="ENSG00000111860.14"/>
</dbReference>
<dbReference type="Ensembl" id="ENST00000368488.9">
    <molecule id="Q5SZL2-4"/>
    <property type="protein sequence ID" value="ENSP00000357474.5"/>
    <property type="gene ID" value="ENSG00000111860.14"/>
</dbReference>
<dbReference type="Ensembl" id="ENST00000368491.8">
    <molecule id="Q5SZL2-1"/>
    <property type="protein sequence ID" value="ENSP00000357477.3"/>
    <property type="gene ID" value="ENSG00000111860.14"/>
</dbReference>
<dbReference type="Ensembl" id="ENST00000392500.7">
    <molecule id="Q5SZL2-2"/>
    <property type="protein sequence ID" value="ENSP00000376288.3"/>
    <property type="gene ID" value="ENSG00000111860.14"/>
</dbReference>
<dbReference type="Ensembl" id="ENST00000419517.2">
    <molecule id="Q5SZL2-5"/>
    <property type="protein sequence ID" value="ENSP00000393317.2"/>
    <property type="gene ID" value="ENSG00000111860.14"/>
</dbReference>
<dbReference type="GeneID" id="387119"/>
<dbReference type="KEGG" id="hsa:387119"/>
<dbReference type="MANE-Select" id="ENST00000368491.8">
    <property type="protein sequence ID" value="ENSP00000357477.3"/>
    <property type="RefSeq nucleotide sequence ID" value="NM_001042475.3"/>
    <property type="RefSeq protein sequence ID" value="NP_001035940.1"/>
</dbReference>
<dbReference type="UCSC" id="uc003pxz.3">
    <molecule id="Q5SZL2-1"/>
    <property type="organism name" value="human"/>
</dbReference>
<dbReference type="AGR" id="HGNC:21638"/>
<dbReference type="CTD" id="387119"/>
<dbReference type="DisGeNET" id="387119"/>
<dbReference type="GeneCards" id="CEP85L"/>
<dbReference type="HGNC" id="HGNC:21638">
    <property type="gene designation" value="CEP85L"/>
</dbReference>
<dbReference type="HPA" id="ENSG00000111860">
    <property type="expression patterns" value="Tissue enhanced (testis)"/>
</dbReference>
<dbReference type="MalaCards" id="CEP85L"/>
<dbReference type="MIM" id="618865">
    <property type="type" value="gene"/>
</dbReference>
<dbReference type="MIM" id="618873">
    <property type="type" value="phenotype"/>
</dbReference>
<dbReference type="neXtProt" id="NX_Q5SZL2"/>
<dbReference type="OpenTargets" id="ENSG00000111860"/>
<dbReference type="Orphanet" id="572013">
    <property type="disease" value="Posterior-predominant lissencephaly-broad flat pons and medulla-midline crossing defects syndrome"/>
</dbReference>
<dbReference type="PharmGKB" id="PA134984681"/>
<dbReference type="VEuPathDB" id="HostDB:ENSG00000111860"/>
<dbReference type="eggNOG" id="ENOG502QR5U">
    <property type="taxonomic scope" value="Eukaryota"/>
</dbReference>
<dbReference type="GeneTree" id="ENSGT00620000087993"/>
<dbReference type="HOGENOM" id="CLU_020103_1_0_1"/>
<dbReference type="InParanoid" id="Q5SZL2"/>
<dbReference type="OMA" id="GMILEIQ"/>
<dbReference type="OrthoDB" id="5972981at2759"/>
<dbReference type="PAN-GO" id="Q5SZL2">
    <property type="GO annotations" value="1 GO annotation based on evolutionary models"/>
</dbReference>
<dbReference type="PhylomeDB" id="Q5SZL2"/>
<dbReference type="TreeFam" id="TF331041"/>
<dbReference type="PathwayCommons" id="Q5SZL2"/>
<dbReference type="SignaLink" id="Q5SZL2"/>
<dbReference type="BioGRID-ORCS" id="387119">
    <property type="hits" value="12 hits in 1152 CRISPR screens"/>
</dbReference>
<dbReference type="CD-CODE" id="8C2F96ED">
    <property type="entry name" value="Centrosome"/>
</dbReference>
<dbReference type="ChiTaRS" id="CEP85L">
    <property type="organism name" value="human"/>
</dbReference>
<dbReference type="GenomeRNAi" id="387119"/>
<dbReference type="Pharos" id="Q5SZL2">
    <property type="development level" value="Tbio"/>
</dbReference>
<dbReference type="PRO" id="PR:Q5SZL2"/>
<dbReference type="Proteomes" id="UP000005640">
    <property type="component" value="Chromosome 6"/>
</dbReference>
<dbReference type="RNAct" id="Q5SZL2">
    <property type="molecule type" value="protein"/>
</dbReference>
<dbReference type="Bgee" id="ENSG00000111860">
    <property type="expression patterns" value="Expressed in thymus and 197 other cell types or tissues"/>
</dbReference>
<dbReference type="ExpressionAtlas" id="Q5SZL2">
    <property type="expression patterns" value="baseline and differential"/>
</dbReference>
<dbReference type="GO" id="GO:0005813">
    <property type="term" value="C:centrosome"/>
    <property type="evidence" value="ECO:0000318"/>
    <property type="project" value="GO_Central"/>
</dbReference>
<dbReference type="GO" id="GO:0005737">
    <property type="term" value="C:cytoplasm"/>
    <property type="evidence" value="ECO:0007669"/>
    <property type="project" value="UniProtKB-KW"/>
</dbReference>
<dbReference type="GO" id="GO:0000242">
    <property type="term" value="C:pericentriolar material"/>
    <property type="evidence" value="ECO:0000314"/>
    <property type="project" value="UniProtKB"/>
</dbReference>
<dbReference type="GO" id="GO:0001764">
    <property type="term" value="P:neuron migration"/>
    <property type="evidence" value="ECO:0000315"/>
    <property type="project" value="UniProtKB"/>
</dbReference>
<dbReference type="InterPro" id="IPR040210">
    <property type="entry name" value="Cep85/Cep85L"/>
</dbReference>
<dbReference type="PANTHER" id="PTHR31075">
    <property type="entry name" value="CENTROSOMAL PROTEIN OF 85 KDA"/>
    <property type="match status" value="1"/>
</dbReference>
<dbReference type="PANTHER" id="PTHR31075:SF2">
    <property type="entry name" value="CENTROSOMAL PROTEIN OF 85 KDA-LIKE"/>
    <property type="match status" value="1"/>
</dbReference>
<dbReference type="Pfam" id="PF24555">
    <property type="entry name" value="CC4_CEP85"/>
    <property type="match status" value="1"/>
</dbReference>
<proteinExistence type="evidence at protein level"/>
<gene>
    <name evidence="14" type="primary">CEP85L</name>
    <name type="synonym">C6orf204</name>
</gene>
<reference key="1">
    <citation type="submission" date="2003-06" db="EMBL/GenBank/DDBJ databases">
        <authorList>
            <person name="Sha J.H."/>
            <person name="Zhou Z.M."/>
            <person name="Li J.M."/>
        </authorList>
    </citation>
    <scope>NUCLEOTIDE SEQUENCE [MRNA] (ISOFORM 3)</scope>
    <scope>VARIANT THR-251</scope>
    <source>
        <tissue>Testis</tissue>
    </source>
</reference>
<reference key="2">
    <citation type="journal article" date="2003" name="Nature">
        <title>The DNA sequence and analysis of human chromosome 6.</title>
        <authorList>
            <person name="Mungall A.J."/>
            <person name="Palmer S.A."/>
            <person name="Sims S.K."/>
            <person name="Edwards C.A."/>
            <person name="Ashurst J.L."/>
            <person name="Wilming L."/>
            <person name="Jones M.C."/>
            <person name="Horton R."/>
            <person name="Hunt S.E."/>
            <person name="Scott C.E."/>
            <person name="Gilbert J.G.R."/>
            <person name="Clamp M.E."/>
            <person name="Bethel G."/>
            <person name="Milne S."/>
            <person name="Ainscough R."/>
            <person name="Almeida J.P."/>
            <person name="Ambrose K.D."/>
            <person name="Andrews T.D."/>
            <person name="Ashwell R.I.S."/>
            <person name="Babbage A.K."/>
            <person name="Bagguley C.L."/>
            <person name="Bailey J."/>
            <person name="Banerjee R."/>
            <person name="Barker D.J."/>
            <person name="Barlow K.F."/>
            <person name="Bates K."/>
            <person name="Beare D.M."/>
            <person name="Beasley H."/>
            <person name="Beasley O."/>
            <person name="Bird C.P."/>
            <person name="Blakey S.E."/>
            <person name="Bray-Allen S."/>
            <person name="Brook J."/>
            <person name="Brown A.J."/>
            <person name="Brown J.Y."/>
            <person name="Burford D.C."/>
            <person name="Burrill W."/>
            <person name="Burton J."/>
            <person name="Carder C."/>
            <person name="Carter N.P."/>
            <person name="Chapman J.C."/>
            <person name="Clark S.Y."/>
            <person name="Clark G."/>
            <person name="Clee C.M."/>
            <person name="Clegg S."/>
            <person name="Cobley V."/>
            <person name="Collier R.E."/>
            <person name="Collins J.E."/>
            <person name="Colman L.K."/>
            <person name="Corby N.R."/>
            <person name="Coville G.J."/>
            <person name="Culley K.M."/>
            <person name="Dhami P."/>
            <person name="Davies J."/>
            <person name="Dunn M."/>
            <person name="Earthrowl M.E."/>
            <person name="Ellington A.E."/>
            <person name="Evans K.A."/>
            <person name="Faulkner L."/>
            <person name="Francis M.D."/>
            <person name="Frankish A."/>
            <person name="Frankland J."/>
            <person name="French L."/>
            <person name="Garner P."/>
            <person name="Garnett J."/>
            <person name="Ghori M.J."/>
            <person name="Gilby L.M."/>
            <person name="Gillson C.J."/>
            <person name="Glithero R.J."/>
            <person name="Grafham D.V."/>
            <person name="Grant M."/>
            <person name="Gribble S."/>
            <person name="Griffiths C."/>
            <person name="Griffiths M.N.D."/>
            <person name="Hall R."/>
            <person name="Halls K.S."/>
            <person name="Hammond S."/>
            <person name="Harley J.L."/>
            <person name="Hart E.A."/>
            <person name="Heath P.D."/>
            <person name="Heathcott R."/>
            <person name="Holmes S.J."/>
            <person name="Howden P.J."/>
            <person name="Howe K.L."/>
            <person name="Howell G.R."/>
            <person name="Huckle E."/>
            <person name="Humphray S.J."/>
            <person name="Humphries M.D."/>
            <person name="Hunt A.R."/>
            <person name="Johnson C.M."/>
            <person name="Joy A.A."/>
            <person name="Kay M."/>
            <person name="Keenan S.J."/>
            <person name="Kimberley A.M."/>
            <person name="King A."/>
            <person name="Laird G.K."/>
            <person name="Langford C."/>
            <person name="Lawlor S."/>
            <person name="Leongamornlert D.A."/>
            <person name="Leversha M."/>
            <person name="Lloyd C.R."/>
            <person name="Lloyd D.M."/>
            <person name="Loveland J.E."/>
            <person name="Lovell J."/>
            <person name="Martin S."/>
            <person name="Mashreghi-Mohammadi M."/>
            <person name="Maslen G.L."/>
            <person name="Matthews L."/>
            <person name="McCann O.T."/>
            <person name="McLaren S.J."/>
            <person name="McLay K."/>
            <person name="McMurray A."/>
            <person name="Moore M.J.F."/>
            <person name="Mullikin J.C."/>
            <person name="Niblett D."/>
            <person name="Nickerson T."/>
            <person name="Novik K.L."/>
            <person name="Oliver K."/>
            <person name="Overton-Larty E.K."/>
            <person name="Parker A."/>
            <person name="Patel R."/>
            <person name="Pearce A.V."/>
            <person name="Peck A.I."/>
            <person name="Phillimore B.J.C.T."/>
            <person name="Phillips S."/>
            <person name="Plumb R.W."/>
            <person name="Porter K.M."/>
            <person name="Ramsey Y."/>
            <person name="Ranby S.A."/>
            <person name="Rice C.M."/>
            <person name="Ross M.T."/>
            <person name="Searle S.M."/>
            <person name="Sehra H.K."/>
            <person name="Sheridan E."/>
            <person name="Skuce C.D."/>
            <person name="Smith S."/>
            <person name="Smith M."/>
            <person name="Spraggon L."/>
            <person name="Squares S.L."/>
            <person name="Steward C.A."/>
            <person name="Sycamore N."/>
            <person name="Tamlyn-Hall G."/>
            <person name="Tester J."/>
            <person name="Theaker A.J."/>
            <person name="Thomas D.W."/>
            <person name="Thorpe A."/>
            <person name="Tracey A."/>
            <person name="Tromans A."/>
            <person name="Tubby B."/>
            <person name="Wall M."/>
            <person name="Wallis J.M."/>
            <person name="West A.P."/>
            <person name="White S.S."/>
            <person name="Whitehead S.L."/>
            <person name="Whittaker H."/>
            <person name="Wild A."/>
            <person name="Willey D.J."/>
            <person name="Wilmer T.E."/>
            <person name="Wood J.M."/>
            <person name="Wray P.W."/>
            <person name="Wyatt J.C."/>
            <person name="Young L."/>
            <person name="Younger R.M."/>
            <person name="Bentley D.R."/>
            <person name="Coulson A."/>
            <person name="Durbin R.M."/>
            <person name="Hubbard T."/>
            <person name="Sulston J.E."/>
            <person name="Dunham I."/>
            <person name="Rogers J."/>
            <person name="Beck S."/>
        </authorList>
    </citation>
    <scope>NUCLEOTIDE SEQUENCE [LARGE SCALE GENOMIC DNA]</scope>
</reference>
<reference key="3">
    <citation type="submission" date="2005-09" db="EMBL/GenBank/DDBJ databases">
        <authorList>
            <person name="Mural R.J."/>
            <person name="Istrail S."/>
            <person name="Sutton G.G."/>
            <person name="Florea L."/>
            <person name="Halpern A.L."/>
            <person name="Mobarry C.M."/>
            <person name="Lippert R."/>
            <person name="Walenz B."/>
            <person name="Shatkay H."/>
            <person name="Dew I."/>
            <person name="Miller J.R."/>
            <person name="Flanigan M.J."/>
            <person name="Edwards N.J."/>
            <person name="Bolanos R."/>
            <person name="Fasulo D."/>
            <person name="Halldorsson B.V."/>
            <person name="Hannenhalli S."/>
            <person name="Turner R."/>
            <person name="Yooseph S."/>
            <person name="Lu F."/>
            <person name="Nusskern D.R."/>
            <person name="Shue B.C."/>
            <person name="Zheng X.H."/>
            <person name="Zhong F."/>
            <person name="Delcher A.L."/>
            <person name="Huson D.H."/>
            <person name="Kravitz S.A."/>
            <person name="Mouchard L."/>
            <person name="Reinert K."/>
            <person name="Remington K.A."/>
            <person name="Clark A.G."/>
            <person name="Waterman M.S."/>
            <person name="Eichler E.E."/>
            <person name="Adams M.D."/>
            <person name="Hunkapiller M.W."/>
            <person name="Myers E.W."/>
            <person name="Venter J.C."/>
        </authorList>
    </citation>
    <scope>NUCLEOTIDE SEQUENCE [LARGE SCALE GENOMIC DNA]</scope>
</reference>
<reference key="4">
    <citation type="journal article" date="2004" name="Genome Res.">
        <title>The status, quality, and expansion of the NIH full-length cDNA project: the Mammalian Gene Collection (MGC).</title>
        <authorList>
            <consortium name="The MGC Project Team"/>
        </authorList>
    </citation>
    <scope>NUCLEOTIDE SEQUENCE [LARGE SCALE MRNA] (ISOFORM 2)</scope>
    <scope>VARIANTS GLY-137 AND THR-251</scope>
    <source>
        <tissue>Lung</tissue>
    </source>
</reference>
<reference key="5">
    <citation type="journal article" date="2012" name="Genes Chromosomes Cancer">
        <title>Systematic screen for tyrosine kinase rearrangements identifies a novel C6orf204-PDGFRB fusion in a patient with recurrent T-ALL and an associated myeloproliferative neoplasm.</title>
        <authorList>
            <person name="Chmielecki J."/>
            <person name="Peifer M."/>
            <person name="Viale A."/>
            <person name="Hutchinson K."/>
            <person name="Giltnane J."/>
            <person name="Socci N.D."/>
            <person name="Hollis C.J."/>
            <person name="Dean R.S."/>
            <person name="Yenamandra A."/>
            <person name="Jagasia M."/>
            <person name="Kim A.S."/>
            <person name="Dave U.P."/>
            <person name="Thomas R.K."/>
            <person name="Pao W."/>
        </authorList>
    </citation>
    <scope>NUCLEOTIDE SEQUENCE [MRNA] OF 1-674 (ISOFORM 4)</scope>
    <scope>TISSUE SPECIFICITY</scope>
    <scope>CHROMOSOMAL TRANSLOCATION WITH PDGFRB</scope>
    <scope>POSSIBLE INVOLVEMENT IN T-LYMPHOBLASTIC LYMPHOMA</scope>
    <source>
        <tissue>Peripheral blood</tissue>
    </source>
</reference>
<reference key="6">
    <citation type="journal article" date="2001" name="Cancer Immun.">
        <title>Humoral immunity to human breast cancer: antigen definition and quantitative analysis of mRNA expression.</title>
        <authorList>
            <person name="Scanlan M.J."/>
            <person name="Gout I."/>
            <person name="Gordon C.M."/>
            <person name="Williamson B."/>
            <person name="Stockert E."/>
            <person name="Gure A.O."/>
            <person name="Jaeger D."/>
            <person name="Chen Y.-T."/>
            <person name="Mackay A."/>
            <person name="O'Hare M.J."/>
            <person name="Old L.J."/>
        </authorList>
    </citation>
    <scope>NUCLEOTIDE SEQUENCE [MRNA] OF 260-805 (ISOFORM 1)</scope>
    <source>
        <tissue>Mammary tumor</tissue>
    </source>
</reference>
<reference key="7">
    <citation type="journal article" date="2003" name="Nature">
        <title>Proteomic characterization of the human centrosome by protein correlation profiling.</title>
        <authorList>
            <person name="Andersen J.S."/>
            <person name="Wilkinson C.J."/>
            <person name="Mayor T."/>
            <person name="Mortensen P."/>
            <person name="Nigg E.A."/>
            <person name="Mann M."/>
        </authorList>
    </citation>
    <scope>IDENTIFICATION BY MASS SPECTROMETRY</scope>
    <scope>SUBCELLULAR LOCATION [LARGE SCALE ANALYSIS]</scope>
    <source>
        <tissue>Lymphoblast</tissue>
    </source>
</reference>
<reference key="8">
    <citation type="journal article" date="2011" name="EMBO J.">
        <title>Novel asymmetrically localizing components of human centrosomes identified by complementary proteomics methods.</title>
        <authorList>
            <person name="Jakobsen L."/>
            <person name="Vanselow K."/>
            <person name="Skogs M."/>
            <person name="Toyoda Y."/>
            <person name="Lundberg E."/>
            <person name="Poser I."/>
            <person name="Falkenby L.G."/>
            <person name="Bennetzen M."/>
            <person name="Westendorf J."/>
            <person name="Nigg E.A."/>
            <person name="Uhlen M."/>
            <person name="Hyman A.A."/>
            <person name="Andersen J.S."/>
        </authorList>
    </citation>
    <scope>IDENTIFICATION BY MASS SPECTROMETRY</scope>
    <scope>SUBCELLULAR LOCATION</scope>
</reference>
<reference key="9">
    <citation type="journal article" date="2013" name="J. Proteome Res.">
        <title>Toward a comprehensive characterization of a human cancer cell phosphoproteome.</title>
        <authorList>
            <person name="Zhou H."/>
            <person name="Di Palma S."/>
            <person name="Preisinger C."/>
            <person name="Peng M."/>
            <person name="Polat A.N."/>
            <person name="Heck A.J."/>
            <person name="Mohammed S."/>
        </authorList>
    </citation>
    <scope>PHOSPHORYLATION [LARGE SCALE ANALYSIS] AT SER-15 AND SER-207</scope>
    <scope>IDENTIFICATION BY MASS SPECTROMETRY [LARGE SCALE ANALYSIS]</scope>
    <source>
        <tissue>Erythroleukemia</tissue>
    </source>
</reference>
<reference key="10">
    <citation type="journal article" date="2006" name="Science">
        <title>The consensus coding sequences of human breast and colorectal cancers.</title>
        <authorList>
            <person name="Sjoeblom T."/>
            <person name="Jones S."/>
            <person name="Wood L.D."/>
            <person name="Parsons D.W."/>
            <person name="Lin J."/>
            <person name="Barber T.D."/>
            <person name="Mandelker D."/>
            <person name="Leary R.J."/>
            <person name="Ptak J."/>
            <person name="Silliman N."/>
            <person name="Szabo S."/>
            <person name="Buckhaults P."/>
            <person name="Farrell C."/>
            <person name="Meeh P."/>
            <person name="Markowitz S.D."/>
            <person name="Willis J."/>
            <person name="Dawson D."/>
            <person name="Willson J.K.V."/>
            <person name="Gazdar A.F."/>
            <person name="Hartigan J."/>
            <person name="Wu L."/>
            <person name="Liu C."/>
            <person name="Parmigiani G."/>
            <person name="Park B.H."/>
            <person name="Bachman K.E."/>
            <person name="Papadopoulos N."/>
            <person name="Vogelstein B."/>
            <person name="Kinzler K.W."/>
            <person name="Velculescu V.E."/>
        </authorList>
    </citation>
    <scope>VARIANT [LARGE SCALE ANALYSIS] PHE-345</scope>
</reference>
<reference key="11">
    <citation type="journal article" date="2020" name="Neuron">
        <title>Pathogenic Variants in CEP85L Cause Sporadic and Familial Posterior Predominant Lissencephaly.</title>
        <authorList>
            <consortium name="University of Washington Center for Mendelian Genomics"/>
            <person name="Tsai M.H."/>
            <person name="Muir A.M."/>
            <person name="Wang W.J."/>
            <person name="Kang Y.N."/>
            <person name="Yang K.C."/>
            <person name="Chao N.H."/>
            <person name="Wu M.F."/>
            <person name="Chang Y.C."/>
            <person name="Porter B.E."/>
            <person name="Jansen L.A."/>
            <person name="Sebire G."/>
            <person name="Deconinck N."/>
            <person name="Fan W.L."/>
            <person name="Su S.C."/>
            <person name="Chung W.H."/>
            <person name="Almanza Fuerte E.P."/>
            <person name="Mehaffey M.G."/>
            <person name="Ng C.C."/>
            <person name="Chan C.K."/>
            <person name="Lim K.S."/>
            <person name="Leventer R.J."/>
            <person name="Lockhart P.J."/>
            <person name="Riney K."/>
            <person name="Damiano J.A."/>
            <person name="Hildebrand M.S."/>
            <person name="Mirzaa G.M."/>
            <person name="Dobyns W.B."/>
            <person name="Berkovic S.F."/>
            <person name="Scheffer I.E."/>
            <person name="Tsai J.W."/>
            <person name="Mefford H.C."/>
        </authorList>
    </citation>
    <scope>INVOLVEMENT IN LIS10</scope>
    <scope>VARIANTS LIS10 CYS-58; ASN-65; THR-68 AND ARG-69</scope>
    <scope>SUBCELLULAR LOCATION</scope>
    <scope>FUNCTION</scope>
</reference>
<accession>Q5SZL2</accession>
<accession>A1A4E1</accession>
<accession>A2A3P2</accession>
<accession>A2IDE5</accession>
<accession>F8W6J2</accession>
<accession>G3V0H3</accession>
<accession>Q2TAM2</accession>
<accession>Q5T323</accession>
<accession>Q7Z5K7</accession>
<accession>Q9H289</accession>
<organism>
    <name type="scientific">Homo sapiens</name>
    <name type="common">Human</name>
    <dbReference type="NCBI Taxonomy" id="9606"/>
    <lineage>
        <taxon>Eukaryota</taxon>
        <taxon>Metazoa</taxon>
        <taxon>Chordata</taxon>
        <taxon>Craniata</taxon>
        <taxon>Vertebrata</taxon>
        <taxon>Euteleostomi</taxon>
        <taxon>Mammalia</taxon>
        <taxon>Eutheria</taxon>
        <taxon>Euarchontoglires</taxon>
        <taxon>Primates</taxon>
        <taxon>Haplorrhini</taxon>
        <taxon>Catarrhini</taxon>
        <taxon>Hominidae</taxon>
        <taxon>Homo</taxon>
    </lineage>
</organism>
<comment type="function">
    <text evidence="8">Plays an essential role in neuronal cell migration.</text>
</comment>
<comment type="interaction">
    <interactant intactId="EBI-12344751">
        <id>Q5SZL2-5</id>
    </interactant>
    <interactant intactId="EBI-750973">
        <id>O00233</id>
        <label>PSMD9</label>
    </interactant>
    <organismsDiffer>false</organismsDiffer>
    <experiments>3</experiments>
</comment>
<comment type="interaction">
    <interactant intactId="EBI-12344751">
        <id>Q5SZL2-5</id>
    </interactant>
    <interactant intactId="EBI-11523345">
        <id>Q8IYF3-3</id>
        <label>TEX11</label>
    </interactant>
    <organismsDiffer>false</organismsDiffer>
    <experiments>3</experiments>
</comment>
<comment type="interaction">
    <interactant intactId="EBI-12344751">
        <id>Q5SZL2-5</id>
    </interactant>
    <interactant intactId="EBI-740727">
        <id>Q8TAU3</id>
        <label>ZNF417</label>
    </interactant>
    <organismsDiffer>false</organismsDiffer>
    <experiments>3</experiments>
</comment>
<comment type="subcellular location">
    <subcellularLocation>
        <location evidence="3 6 8">Cytoplasm</location>
        <location evidence="3 6 8">Cytoskeleton</location>
        <location evidence="3 6 8">Microtubule organizing center</location>
        <location evidence="3 6 8">Centrosome</location>
    </subcellularLocation>
    <text evidence="8">Localized specifically to the pericentriolar region.</text>
</comment>
<comment type="alternative products">
    <event type="alternative splicing"/>
    <isoform>
        <id>Q5SZL2-1</id>
        <name>1</name>
        <sequence type="displayed"/>
    </isoform>
    <isoform>
        <id>Q5SZL2-2</id>
        <name>2</name>
        <sequence type="described" ref="VSP_027338 VSP_027339 VSP_027340"/>
    </isoform>
    <isoform>
        <id>Q5SZL2-3</id>
        <name>3</name>
        <sequence type="described" ref="VSP_027337 VSP_027339 VSP_027340"/>
    </isoform>
    <isoform>
        <id>Q5SZL2-4</id>
        <name>4</name>
        <sequence type="described" ref="VSP_027338"/>
    </isoform>
    <isoform>
        <id>Q5SZL2-5</id>
        <name>5</name>
        <sequence type="described" ref="VSP_027339 VSP_027340"/>
    </isoform>
</comment>
<comment type="tissue specificity">
    <text evidence="7">Isoform 1 and isoform 4 are expressed in spleen, lymph, thymus, tonsil and peripheral blood leukocytes, with isoform 1 expressed at higher levels. Isoform 4 is detected in K-562 leukemia cells and in the blood of precursor T lymphoblastic lymphoma (T-ALL) patients.</text>
</comment>
<comment type="disease">
    <text evidence="7">A chromosomal aberration involving CEP85L is found in a patient with T-lymphoblastic lymphoma (T-ALL) and an associated myeloproliferative neoplasm (MPN) with eosinophilia. Translocation t(5;6)(q33-34;q23) with PDGFRB. The translocation fuses the 5'-end of CEP85L (isoform 4) to the 3'-end of PDGFRB.</text>
</comment>
<comment type="disease" evidence="8">
    <disease id="DI-05832">
        <name>Lissencephaly 10</name>
        <acronym>LIS10</acronym>
        <description>A form of lissencephaly, a disorder of cortical development characterized by agyria or pachygyria and disorganization of the clear neuronal lamination of normal six-layered cortex. LIS10 is an autosomal dominant form clinically characterized by variably delayed development, mildly to moderately impaired intellectual development, language delay, and seizures. Some patients have normal early development and borderline to mild cognitive impairment.</description>
        <dbReference type="MIM" id="618873"/>
    </disease>
    <text>The disease is caused by variants affecting the gene represented in this entry.</text>
</comment>
<comment type="similarity">
    <text evidence="13">Belongs to the CEP85 family.</text>
</comment>
<comment type="sequence caution" evidence="13">
    <conflict type="erroneous initiation">
        <sequence resource="EMBL-CDS" id="AAI10836"/>
    </conflict>
    <text>Truncated N-terminus.</text>
</comment>